<gene>
    <name evidence="1" type="primary">gcvPA</name>
    <name type="ordered locus">A2cp1_2716</name>
</gene>
<feature type="chain" id="PRO_1000147974" description="Probable glycine dehydrogenase (decarboxylating) subunit 1">
    <location>
        <begin position="1"/>
        <end position="445"/>
    </location>
</feature>
<keyword id="KW-0560">Oxidoreductase</keyword>
<organism>
    <name type="scientific">Anaeromyxobacter dehalogenans (strain 2CP-1 / ATCC BAA-258)</name>
    <dbReference type="NCBI Taxonomy" id="455488"/>
    <lineage>
        <taxon>Bacteria</taxon>
        <taxon>Pseudomonadati</taxon>
        <taxon>Myxococcota</taxon>
        <taxon>Myxococcia</taxon>
        <taxon>Myxococcales</taxon>
        <taxon>Cystobacterineae</taxon>
        <taxon>Anaeromyxobacteraceae</taxon>
        <taxon>Anaeromyxobacter</taxon>
    </lineage>
</organism>
<evidence type="ECO:0000255" key="1">
    <source>
        <dbReference type="HAMAP-Rule" id="MF_00712"/>
    </source>
</evidence>
<comment type="function">
    <text evidence="1">The glycine cleavage system catalyzes the degradation of glycine. The P protein binds the alpha-amino group of glycine through its pyridoxal phosphate cofactor; CO(2) is released and the remaining methylamine moiety is then transferred to the lipoamide cofactor of the H protein.</text>
</comment>
<comment type="catalytic activity">
    <reaction evidence="1">
        <text>N(6)-[(R)-lipoyl]-L-lysyl-[glycine-cleavage complex H protein] + glycine + H(+) = N(6)-[(R)-S(8)-aminomethyldihydrolipoyl]-L-lysyl-[glycine-cleavage complex H protein] + CO2</text>
        <dbReference type="Rhea" id="RHEA:24304"/>
        <dbReference type="Rhea" id="RHEA-COMP:10494"/>
        <dbReference type="Rhea" id="RHEA-COMP:10495"/>
        <dbReference type="ChEBI" id="CHEBI:15378"/>
        <dbReference type="ChEBI" id="CHEBI:16526"/>
        <dbReference type="ChEBI" id="CHEBI:57305"/>
        <dbReference type="ChEBI" id="CHEBI:83099"/>
        <dbReference type="ChEBI" id="CHEBI:83143"/>
        <dbReference type="EC" id="1.4.4.2"/>
    </reaction>
</comment>
<comment type="subunit">
    <text evidence="1">The glycine cleavage system is composed of four proteins: P, T, L and H. In this organism, the P 'protein' is a heterodimer of two subunits.</text>
</comment>
<comment type="similarity">
    <text evidence="1">Belongs to the GcvP family. N-terminal subunit subfamily.</text>
</comment>
<proteinExistence type="inferred from homology"/>
<name>GCSPA_ANAD2</name>
<reference key="1">
    <citation type="submission" date="2009-01" db="EMBL/GenBank/DDBJ databases">
        <title>Complete sequence of Anaeromyxobacter dehalogenans 2CP-1.</title>
        <authorList>
            <person name="Lucas S."/>
            <person name="Copeland A."/>
            <person name="Lapidus A."/>
            <person name="Glavina del Rio T."/>
            <person name="Dalin E."/>
            <person name="Tice H."/>
            <person name="Bruce D."/>
            <person name="Goodwin L."/>
            <person name="Pitluck S."/>
            <person name="Saunders E."/>
            <person name="Brettin T."/>
            <person name="Detter J.C."/>
            <person name="Han C."/>
            <person name="Larimer F."/>
            <person name="Land M."/>
            <person name="Hauser L."/>
            <person name="Kyrpides N."/>
            <person name="Ovchinnikova G."/>
            <person name="Beliaev A.S."/>
            <person name="Richardson P."/>
        </authorList>
    </citation>
    <scope>NUCLEOTIDE SEQUENCE [LARGE SCALE GENOMIC DNA]</scope>
    <source>
        <strain>2CP-1 / ATCC BAA-258</strain>
    </source>
</reference>
<accession>B8JDY8</accession>
<protein>
    <recommendedName>
        <fullName evidence="1">Probable glycine dehydrogenase (decarboxylating) subunit 1</fullName>
        <ecNumber evidence="1">1.4.4.2</ecNumber>
    </recommendedName>
    <alternativeName>
        <fullName evidence="1">Glycine cleavage system P-protein subunit 1</fullName>
    </alternativeName>
    <alternativeName>
        <fullName evidence="1">Glycine decarboxylase subunit 1</fullName>
    </alternativeName>
    <alternativeName>
        <fullName evidence="1">Glycine dehydrogenase (aminomethyl-transferring) subunit 1</fullName>
    </alternativeName>
</protein>
<sequence length="445" mass="47421">MRYHPHTPDDVRAMLDVVGAERVDDLFRSIPQALRLDRPLDLPPAADEIALFSELRRLAARNETAHPPFVGAGCYPHHVPPVVDQLLLRGEFFTAYTPYQPEISQGTLQALFEWQTFVCLLTGMDVSNASMYDGATATAEAALMAGRITGRDKVVVSAALHPEYRKVLATYLRSTGDEIVTVPFGADGRTDLAALAQAVDGRTACVILGYPNFLGVVDALPEAAALARAAGALTVAATAEAVSLGLLQAPGALGADVAVGTFQSFGNPMSFGGPAPGFFATREKSLRQMPGRVAGATVDKQGRRGFVLTLSTREQHIRREKATSNICTNSGLCALASTIHLSLLGKRGLAELARLNHGRARMLRDAMERAGCRPVFSGPYFNEQVFDVGDAEAVVAKLAKRGIVAGAPLARWYPDAPHAKGALLCAATELHGPELIQLFASTVRS</sequence>
<dbReference type="EC" id="1.4.4.2" evidence="1"/>
<dbReference type="EMBL" id="CP001359">
    <property type="protein sequence ID" value="ACL66053.1"/>
    <property type="molecule type" value="Genomic_DNA"/>
</dbReference>
<dbReference type="RefSeq" id="WP_012633820.1">
    <property type="nucleotide sequence ID" value="NC_011891.1"/>
</dbReference>
<dbReference type="SMR" id="B8JDY8"/>
<dbReference type="KEGG" id="acp:A2cp1_2716"/>
<dbReference type="HOGENOM" id="CLU_004620_0_2_7"/>
<dbReference type="Proteomes" id="UP000007089">
    <property type="component" value="Chromosome"/>
</dbReference>
<dbReference type="GO" id="GO:0004375">
    <property type="term" value="F:glycine dehydrogenase (decarboxylating) activity"/>
    <property type="evidence" value="ECO:0007669"/>
    <property type="project" value="UniProtKB-EC"/>
</dbReference>
<dbReference type="GO" id="GO:0019464">
    <property type="term" value="P:glycine decarboxylation via glycine cleavage system"/>
    <property type="evidence" value="ECO:0007669"/>
    <property type="project" value="UniProtKB-UniRule"/>
</dbReference>
<dbReference type="GO" id="GO:0009116">
    <property type="term" value="P:nucleoside metabolic process"/>
    <property type="evidence" value="ECO:0007669"/>
    <property type="project" value="InterPro"/>
</dbReference>
<dbReference type="CDD" id="cd00613">
    <property type="entry name" value="GDC-P"/>
    <property type="match status" value="1"/>
</dbReference>
<dbReference type="Gene3D" id="3.90.1150.10">
    <property type="entry name" value="Aspartate Aminotransferase, domain 1"/>
    <property type="match status" value="1"/>
</dbReference>
<dbReference type="Gene3D" id="3.40.640.10">
    <property type="entry name" value="Type I PLP-dependent aspartate aminotransferase-like (Major domain)"/>
    <property type="match status" value="1"/>
</dbReference>
<dbReference type="HAMAP" id="MF_00712">
    <property type="entry name" value="GcvPA"/>
    <property type="match status" value="1"/>
</dbReference>
<dbReference type="InterPro" id="IPR023010">
    <property type="entry name" value="GcvPA"/>
</dbReference>
<dbReference type="InterPro" id="IPR049315">
    <property type="entry name" value="GDC-P_N"/>
</dbReference>
<dbReference type="InterPro" id="IPR020581">
    <property type="entry name" value="GDC_P"/>
</dbReference>
<dbReference type="InterPro" id="IPR015424">
    <property type="entry name" value="PyrdxlP-dep_Trfase"/>
</dbReference>
<dbReference type="InterPro" id="IPR015421">
    <property type="entry name" value="PyrdxlP-dep_Trfase_major"/>
</dbReference>
<dbReference type="InterPro" id="IPR015422">
    <property type="entry name" value="PyrdxlP-dep_Trfase_small"/>
</dbReference>
<dbReference type="NCBIfam" id="NF001696">
    <property type="entry name" value="PRK00451.1"/>
    <property type="match status" value="1"/>
</dbReference>
<dbReference type="PANTHER" id="PTHR42806">
    <property type="entry name" value="GLYCINE CLEAVAGE SYSTEM P-PROTEIN"/>
    <property type="match status" value="1"/>
</dbReference>
<dbReference type="PANTHER" id="PTHR42806:SF1">
    <property type="entry name" value="GLYCINE DEHYDROGENASE (DECARBOXYLATING)"/>
    <property type="match status" value="1"/>
</dbReference>
<dbReference type="Pfam" id="PF02347">
    <property type="entry name" value="GDC-P"/>
    <property type="match status" value="1"/>
</dbReference>
<dbReference type="PIRSF" id="PIRSF006815">
    <property type="entry name" value="GcvPA"/>
    <property type="match status" value="1"/>
</dbReference>
<dbReference type="SUPFAM" id="SSF53383">
    <property type="entry name" value="PLP-dependent transferases"/>
    <property type="match status" value="1"/>
</dbReference>